<feature type="chain" id="PRO_0000214937" description="Actin-depolymerizing factor">
    <location>
        <begin position="1"/>
        <end position="143"/>
    </location>
</feature>
<feature type="domain" description="ADF-H" evidence="2">
    <location>
        <begin position="11"/>
        <end position="143"/>
    </location>
</feature>
<evidence type="ECO:0000250" key="1"/>
<evidence type="ECO:0000255" key="2">
    <source>
        <dbReference type="PROSITE-ProRule" id="PRU00599"/>
    </source>
</evidence>
<evidence type="ECO:0000305" key="3"/>
<protein>
    <recommendedName>
        <fullName>Actin-depolymerizing factor</fullName>
        <shortName>ADF</shortName>
    </recommendedName>
</protein>
<proteinExistence type="evidence at transcript level"/>
<reference key="1">
    <citation type="journal article" date="2002" name="Plant Sci.">
        <title>Cloning and characterization of an actin depolymerizing factor gene from grape (Vitis vinifera L.) expressed during rooting in stem cuttings.</title>
        <authorList>
            <person name="Thomas P."/>
            <person name="Schiefelbein J.W."/>
        </authorList>
    </citation>
    <scope>NUCLEOTIDE SEQUENCE [MRNA]</scope>
</reference>
<comment type="function">
    <text evidence="1">Actin-depolymerizing protein. Severs actin filaments (F-actin) and binds to actin monomers (By similarity).</text>
</comment>
<comment type="similarity">
    <text evidence="3">Belongs to the actin-binding proteins ADF family.</text>
</comment>
<sequence length="143" mass="16551">MSFRGLNASSGMGVADHSKNTFLELKRKKVHRYVIFKIDEKKKEVVVEKTGGPAESFDEFAAALPENDCRYAVYDFDFVTSENCQKSKIFFIAWSPDSSRIRAKMLYATSKERFRRELDGVHYEIQATDPTEMDLEVLRERAH</sequence>
<accession>Q8SAG3</accession>
<dbReference type="EMBL" id="AF440310">
    <property type="protein sequence ID" value="AAL79826.1"/>
    <property type="molecule type" value="mRNA"/>
</dbReference>
<dbReference type="RefSeq" id="NP_001268119.1">
    <property type="nucleotide sequence ID" value="NM_001281190.1"/>
</dbReference>
<dbReference type="SMR" id="Q8SAG3"/>
<dbReference type="PaxDb" id="29760-VIT_07s0005g03310.t01"/>
<dbReference type="EnsemblPlants" id="Vitvi07g00595_t001">
    <property type="protein sequence ID" value="Vitvi07g00595_P001"/>
    <property type="gene ID" value="Vitvi07g00595"/>
</dbReference>
<dbReference type="GeneID" id="100232871"/>
<dbReference type="Gramene" id="Vitvi07g00595_t001">
    <property type="protein sequence ID" value="Vitvi07g00595_P001"/>
    <property type="gene ID" value="Vitvi07g00595"/>
</dbReference>
<dbReference type="KEGG" id="vvi:100232871"/>
<dbReference type="eggNOG" id="KOG1735">
    <property type="taxonomic scope" value="Eukaryota"/>
</dbReference>
<dbReference type="HOGENOM" id="CLU_094004_2_2_1"/>
<dbReference type="OrthoDB" id="10249245at2759"/>
<dbReference type="ExpressionAtlas" id="Q8SAG3">
    <property type="expression patterns" value="baseline and differential"/>
</dbReference>
<dbReference type="GO" id="GO:0015629">
    <property type="term" value="C:actin cytoskeleton"/>
    <property type="evidence" value="ECO:0007669"/>
    <property type="project" value="InterPro"/>
</dbReference>
<dbReference type="GO" id="GO:0003779">
    <property type="term" value="F:actin binding"/>
    <property type="evidence" value="ECO:0007669"/>
    <property type="project" value="UniProtKB-KW"/>
</dbReference>
<dbReference type="GO" id="GO:0030042">
    <property type="term" value="P:actin filament depolymerization"/>
    <property type="evidence" value="ECO:0007669"/>
    <property type="project" value="InterPro"/>
</dbReference>
<dbReference type="CDD" id="cd11286">
    <property type="entry name" value="ADF_cofilin_like"/>
    <property type="match status" value="1"/>
</dbReference>
<dbReference type="FunFam" id="3.40.20.10:FF:000025">
    <property type="entry name" value="Actin-depolymerizing factor 2"/>
    <property type="match status" value="1"/>
</dbReference>
<dbReference type="Gene3D" id="3.40.20.10">
    <property type="entry name" value="Severin"/>
    <property type="match status" value="1"/>
</dbReference>
<dbReference type="InterPro" id="IPR002108">
    <property type="entry name" value="ADF-H"/>
</dbReference>
<dbReference type="InterPro" id="IPR029006">
    <property type="entry name" value="ADF-H/Gelsolin-like_dom_sf"/>
</dbReference>
<dbReference type="InterPro" id="IPR017904">
    <property type="entry name" value="ADF/Cofilin"/>
</dbReference>
<dbReference type="PANTHER" id="PTHR11913">
    <property type="entry name" value="COFILIN-RELATED"/>
    <property type="match status" value="1"/>
</dbReference>
<dbReference type="Pfam" id="PF00241">
    <property type="entry name" value="Cofilin_ADF"/>
    <property type="match status" value="1"/>
</dbReference>
<dbReference type="SMART" id="SM00102">
    <property type="entry name" value="ADF"/>
    <property type="match status" value="1"/>
</dbReference>
<dbReference type="SUPFAM" id="SSF55753">
    <property type="entry name" value="Actin depolymerizing proteins"/>
    <property type="match status" value="1"/>
</dbReference>
<dbReference type="PROSITE" id="PS51263">
    <property type="entry name" value="ADF_H"/>
    <property type="match status" value="1"/>
</dbReference>
<organism>
    <name type="scientific">Vitis vinifera</name>
    <name type="common">Grape</name>
    <dbReference type="NCBI Taxonomy" id="29760"/>
    <lineage>
        <taxon>Eukaryota</taxon>
        <taxon>Viridiplantae</taxon>
        <taxon>Streptophyta</taxon>
        <taxon>Embryophyta</taxon>
        <taxon>Tracheophyta</taxon>
        <taxon>Spermatophyta</taxon>
        <taxon>Magnoliopsida</taxon>
        <taxon>eudicotyledons</taxon>
        <taxon>Gunneridae</taxon>
        <taxon>Pentapetalae</taxon>
        <taxon>rosids</taxon>
        <taxon>Vitales</taxon>
        <taxon>Vitaceae</taxon>
        <taxon>Viteae</taxon>
        <taxon>Vitis</taxon>
    </lineage>
</organism>
<keyword id="KW-0009">Actin-binding</keyword>
<name>ADF_VITVI</name>